<comment type="function">
    <text evidence="1">Catalyzes the attachment of glutamate to tRNA(Glu) in a two-step reaction: glutamate is first activated by ATP to form Glu-AMP and then transferred to the acceptor end of tRNA(Glu).</text>
</comment>
<comment type="catalytic activity">
    <reaction evidence="1">
        <text>tRNA(Glu) + L-glutamate + ATP = L-glutamyl-tRNA(Glu) + AMP + diphosphate</text>
        <dbReference type="Rhea" id="RHEA:23540"/>
        <dbReference type="Rhea" id="RHEA-COMP:9663"/>
        <dbReference type="Rhea" id="RHEA-COMP:9680"/>
        <dbReference type="ChEBI" id="CHEBI:29985"/>
        <dbReference type="ChEBI" id="CHEBI:30616"/>
        <dbReference type="ChEBI" id="CHEBI:33019"/>
        <dbReference type="ChEBI" id="CHEBI:78442"/>
        <dbReference type="ChEBI" id="CHEBI:78520"/>
        <dbReference type="ChEBI" id="CHEBI:456215"/>
        <dbReference type="EC" id="6.1.1.17"/>
    </reaction>
</comment>
<comment type="subunit">
    <text evidence="1">Monomer.</text>
</comment>
<comment type="subcellular location">
    <subcellularLocation>
        <location evidence="1">Cytoplasm</location>
    </subcellularLocation>
</comment>
<comment type="similarity">
    <text evidence="1">Belongs to the class-I aminoacyl-tRNA synthetase family. Glutamate--tRNA ligase type 1 subfamily.</text>
</comment>
<accession>A6W7Q5</accession>
<name>SYE_KINRD</name>
<protein>
    <recommendedName>
        <fullName evidence="1">Glutamate--tRNA ligase</fullName>
        <ecNumber evidence="1">6.1.1.17</ecNumber>
    </recommendedName>
    <alternativeName>
        <fullName evidence="1">Glutamyl-tRNA synthetase</fullName>
        <shortName evidence="1">GluRS</shortName>
    </alternativeName>
</protein>
<reference key="1">
    <citation type="journal article" date="2008" name="PLoS ONE">
        <title>Survival in nuclear waste, extreme resistance, and potential applications gleaned from the genome sequence of Kineococcus radiotolerans SRS30216.</title>
        <authorList>
            <person name="Bagwell C.E."/>
            <person name="Bhat S."/>
            <person name="Hawkins G.M."/>
            <person name="Smith B.W."/>
            <person name="Biswas T."/>
            <person name="Hoover T.R."/>
            <person name="Saunders E."/>
            <person name="Han C.S."/>
            <person name="Tsodikov O.V."/>
            <person name="Shimkets L.J."/>
        </authorList>
    </citation>
    <scope>NUCLEOTIDE SEQUENCE [LARGE SCALE GENOMIC DNA]</scope>
    <source>
        <strain>ATCC BAA-149 / DSM 14245 / SRS30216</strain>
    </source>
</reference>
<sequence length="501" mass="54661">MTDIAAPPAPGTSPVRVRFCPSPTGTPHVGLIRTALFNWAHARHTGGTFVFRIEDTDAARDSEESYAQILDALDWLGLDWDEGIGVGGPHEPYRQSLRRPVYDDVVRRLREAGHLYESFSTAEEIEARHEAAGRPKVLGYDGFDRDLTPEQVAAFRAEGREPTLRLRLPEGRDYSFDDVVRGRIEFKAGSFPDPVLVRANGDPLYTLVNPVDDALMGITHVLRGEDLLSSTPRQIALHEALVDIGVSQAVPLFGHLPYVTGEGSKKLSKRDPESNLFHHRDRGFIREGLLNYLALLGWGISEDRDVFSVEEMVAAFDVADVNASPARFDVAKAEAINAAHLRLLAPEDFRGRLVPYLQAAGVLPAQPSPEQLERLAAAAPLVQERMTLLGQAPGMLGFLFVADGDVVLEPDATAALRPEAADVLDASLAALEALTGWTTADLEAALRAAVVEGLGVKPKFAFAPLRTAVTGRRVSPPLFESMEILGRESSLARLRRLRATL</sequence>
<organism>
    <name type="scientific">Kineococcus radiotolerans (strain ATCC BAA-149 / DSM 14245 / SRS30216)</name>
    <dbReference type="NCBI Taxonomy" id="266940"/>
    <lineage>
        <taxon>Bacteria</taxon>
        <taxon>Bacillati</taxon>
        <taxon>Actinomycetota</taxon>
        <taxon>Actinomycetes</taxon>
        <taxon>Kineosporiales</taxon>
        <taxon>Kineosporiaceae</taxon>
        <taxon>Kineococcus</taxon>
    </lineage>
</organism>
<feature type="chain" id="PRO_0000330977" description="Glutamate--tRNA ligase">
    <location>
        <begin position="1"/>
        <end position="501"/>
    </location>
</feature>
<feature type="short sequence motif" description="'HIGH' region" evidence="1">
    <location>
        <begin position="21"/>
        <end position="31"/>
    </location>
</feature>
<feature type="short sequence motif" description="'KMSKS' region" evidence="1">
    <location>
        <begin position="266"/>
        <end position="270"/>
    </location>
</feature>
<feature type="binding site" evidence="1">
    <location>
        <position position="269"/>
    </location>
    <ligand>
        <name>ATP</name>
        <dbReference type="ChEBI" id="CHEBI:30616"/>
    </ligand>
</feature>
<proteinExistence type="inferred from homology"/>
<keyword id="KW-0030">Aminoacyl-tRNA synthetase</keyword>
<keyword id="KW-0067">ATP-binding</keyword>
<keyword id="KW-0963">Cytoplasm</keyword>
<keyword id="KW-0436">Ligase</keyword>
<keyword id="KW-0547">Nucleotide-binding</keyword>
<keyword id="KW-0648">Protein biosynthesis</keyword>
<keyword id="KW-1185">Reference proteome</keyword>
<gene>
    <name evidence="1" type="primary">gltX</name>
    <name type="ordered locus">Krad_1356</name>
</gene>
<dbReference type="EC" id="6.1.1.17" evidence="1"/>
<dbReference type="EMBL" id="CP000750">
    <property type="protein sequence ID" value="ABS02844.1"/>
    <property type="molecule type" value="Genomic_DNA"/>
</dbReference>
<dbReference type="RefSeq" id="WP_012084293.1">
    <property type="nucleotide sequence ID" value="NC_009664.2"/>
</dbReference>
<dbReference type="SMR" id="A6W7Q5"/>
<dbReference type="STRING" id="266940.Krad_1356"/>
<dbReference type="KEGG" id="kra:Krad_1356"/>
<dbReference type="eggNOG" id="COG0008">
    <property type="taxonomic scope" value="Bacteria"/>
</dbReference>
<dbReference type="HOGENOM" id="CLU_015768_6_1_11"/>
<dbReference type="OrthoDB" id="9807503at2"/>
<dbReference type="Proteomes" id="UP000001116">
    <property type="component" value="Chromosome"/>
</dbReference>
<dbReference type="GO" id="GO:0005829">
    <property type="term" value="C:cytosol"/>
    <property type="evidence" value="ECO:0007669"/>
    <property type="project" value="TreeGrafter"/>
</dbReference>
<dbReference type="GO" id="GO:0005524">
    <property type="term" value="F:ATP binding"/>
    <property type="evidence" value="ECO:0007669"/>
    <property type="project" value="UniProtKB-UniRule"/>
</dbReference>
<dbReference type="GO" id="GO:0004818">
    <property type="term" value="F:glutamate-tRNA ligase activity"/>
    <property type="evidence" value="ECO:0007669"/>
    <property type="project" value="UniProtKB-UniRule"/>
</dbReference>
<dbReference type="GO" id="GO:0000049">
    <property type="term" value="F:tRNA binding"/>
    <property type="evidence" value="ECO:0007669"/>
    <property type="project" value="InterPro"/>
</dbReference>
<dbReference type="GO" id="GO:0008270">
    <property type="term" value="F:zinc ion binding"/>
    <property type="evidence" value="ECO:0007669"/>
    <property type="project" value="InterPro"/>
</dbReference>
<dbReference type="GO" id="GO:0006424">
    <property type="term" value="P:glutamyl-tRNA aminoacylation"/>
    <property type="evidence" value="ECO:0007669"/>
    <property type="project" value="UniProtKB-UniRule"/>
</dbReference>
<dbReference type="CDD" id="cd00808">
    <property type="entry name" value="GluRS_core"/>
    <property type="match status" value="1"/>
</dbReference>
<dbReference type="Gene3D" id="1.10.10.350">
    <property type="match status" value="1"/>
</dbReference>
<dbReference type="Gene3D" id="1.10.8.70">
    <property type="entry name" value="Glutamate-tRNA synthetase, class I, anticodon-binding domain 1"/>
    <property type="match status" value="1"/>
</dbReference>
<dbReference type="Gene3D" id="3.40.50.620">
    <property type="entry name" value="HUPs"/>
    <property type="match status" value="1"/>
</dbReference>
<dbReference type="HAMAP" id="MF_00022">
    <property type="entry name" value="Glu_tRNA_synth_type1"/>
    <property type="match status" value="1"/>
</dbReference>
<dbReference type="InterPro" id="IPR045462">
    <property type="entry name" value="aa-tRNA-synth_I_cd-bd"/>
</dbReference>
<dbReference type="InterPro" id="IPR020751">
    <property type="entry name" value="aa-tRNA-synth_I_codon-bd_sub2"/>
</dbReference>
<dbReference type="InterPro" id="IPR008925">
    <property type="entry name" value="aa_tRNA-synth_I_cd-bd_sf"/>
</dbReference>
<dbReference type="InterPro" id="IPR004527">
    <property type="entry name" value="Glu-tRNA-ligase_bac/mito"/>
</dbReference>
<dbReference type="InterPro" id="IPR020752">
    <property type="entry name" value="Glu-tRNA-synth_I_codon-bd_sub1"/>
</dbReference>
<dbReference type="InterPro" id="IPR000924">
    <property type="entry name" value="Glu/Gln-tRNA-synth"/>
</dbReference>
<dbReference type="InterPro" id="IPR020058">
    <property type="entry name" value="Glu/Gln-tRNA-synth_Ib_cat-dom"/>
</dbReference>
<dbReference type="InterPro" id="IPR049940">
    <property type="entry name" value="GluQ/Sye"/>
</dbReference>
<dbReference type="InterPro" id="IPR033910">
    <property type="entry name" value="GluRS_core"/>
</dbReference>
<dbReference type="InterPro" id="IPR014729">
    <property type="entry name" value="Rossmann-like_a/b/a_fold"/>
</dbReference>
<dbReference type="NCBIfam" id="TIGR00464">
    <property type="entry name" value="gltX_bact"/>
    <property type="match status" value="1"/>
</dbReference>
<dbReference type="PANTHER" id="PTHR43311">
    <property type="entry name" value="GLUTAMATE--TRNA LIGASE"/>
    <property type="match status" value="1"/>
</dbReference>
<dbReference type="PANTHER" id="PTHR43311:SF2">
    <property type="entry name" value="GLUTAMATE--TRNA LIGASE, MITOCHONDRIAL-RELATED"/>
    <property type="match status" value="1"/>
</dbReference>
<dbReference type="Pfam" id="PF19269">
    <property type="entry name" value="Anticodon_2"/>
    <property type="match status" value="1"/>
</dbReference>
<dbReference type="Pfam" id="PF00749">
    <property type="entry name" value="tRNA-synt_1c"/>
    <property type="match status" value="1"/>
</dbReference>
<dbReference type="PRINTS" id="PR00987">
    <property type="entry name" value="TRNASYNTHGLU"/>
</dbReference>
<dbReference type="SUPFAM" id="SSF48163">
    <property type="entry name" value="An anticodon-binding domain of class I aminoacyl-tRNA synthetases"/>
    <property type="match status" value="1"/>
</dbReference>
<dbReference type="SUPFAM" id="SSF52374">
    <property type="entry name" value="Nucleotidylyl transferase"/>
    <property type="match status" value="1"/>
</dbReference>
<evidence type="ECO:0000255" key="1">
    <source>
        <dbReference type="HAMAP-Rule" id="MF_00022"/>
    </source>
</evidence>